<name>CLPB_RAT</name>
<proteinExistence type="evidence at transcript level"/>
<gene>
    <name evidence="5" type="primary">Clpb</name>
    <name type="synonym">Skd3</name>
</gene>
<organism>
    <name type="scientific">Rattus norvegicus</name>
    <name type="common">Rat</name>
    <dbReference type="NCBI Taxonomy" id="10116"/>
    <lineage>
        <taxon>Eukaryota</taxon>
        <taxon>Metazoa</taxon>
        <taxon>Chordata</taxon>
        <taxon>Craniata</taxon>
        <taxon>Vertebrata</taxon>
        <taxon>Euteleostomi</taxon>
        <taxon>Mammalia</taxon>
        <taxon>Eutheria</taxon>
        <taxon>Euarchontoglires</taxon>
        <taxon>Glires</taxon>
        <taxon>Rodentia</taxon>
        <taxon>Myomorpha</taxon>
        <taxon>Muroidea</taxon>
        <taxon>Muridae</taxon>
        <taxon>Murinae</taxon>
        <taxon>Rattus</taxon>
    </lineage>
</organism>
<dbReference type="EC" id="3.6.1.-" evidence="1"/>
<dbReference type="EMBL" id="AB027570">
    <property type="protein sequence ID" value="BAA78095.1"/>
    <property type="molecule type" value="mRNA"/>
</dbReference>
<dbReference type="RefSeq" id="NP_075236.1">
    <property type="nucleotide sequence ID" value="NM_022947.1"/>
</dbReference>
<dbReference type="SMR" id="Q9WTT2"/>
<dbReference type="FunCoup" id="Q9WTT2">
    <property type="interactions" value="826"/>
</dbReference>
<dbReference type="STRING" id="10116.ENSRNOP00000072796"/>
<dbReference type="iPTMnet" id="Q9WTT2"/>
<dbReference type="PhosphoSitePlus" id="Q9WTT2"/>
<dbReference type="jPOST" id="Q9WTT2"/>
<dbReference type="PaxDb" id="10116-ENSRNOP00000026665"/>
<dbReference type="GeneID" id="65041"/>
<dbReference type="KEGG" id="rno:65041"/>
<dbReference type="AGR" id="RGD:621328"/>
<dbReference type="CTD" id="81570"/>
<dbReference type="RGD" id="621328">
    <property type="gene designation" value="Clpb"/>
</dbReference>
<dbReference type="eggNOG" id="KOG1051">
    <property type="taxonomic scope" value="Eukaryota"/>
</dbReference>
<dbReference type="InParanoid" id="Q9WTT2"/>
<dbReference type="PhylomeDB" id="Q9WTT2"/>
<dbReference type="PRO" id="PR:Q9WTT2"/>
<dbReference type="Proteomes" id="UP000002494">
    <property type="component" value="Unplaced"/>
</dbReference>
<dbReference type="GO" id="GO:0005737">
    <property type="term" value="C:cytoplasm"/>
    <property type="evidence" value="ECO:0000318"/>
    <property type="project" value="GO_Central"/>
</dbReference>
<dbReference type="GO" id="GO:0005758">
    <property type="term" value="C:mitochondrial intermembrane space"/>
    <property type="evidence" value="ECO:0000250"/>
    <property type="project" value="UniProtKB"/>
</dbReference>
<dbReference type="GO" id="GO:0005739">
    <property type="term" value="C:mitochondrion"/>
    <property type="evidence" value="ECO:0000318"/>
    <property type="project" value="GO_Central"/>
</dbReference>
<dbReference type="GO" id="GO:0005524">
    <property type="term" value="F:ATP binding"/>
    <property type="evidence" value="ECO:0007669"/>
    <property type="project" value="UniProtKB-KW"/>
</dbReference>
<dbReference type="GO" id="GO:0016887">
    <property type="term" value="F:ATP hydrolysis activity"/>
    <property type="evidence" value="ECO:0000250"/>
    <property type="project" value="UniProtKB"/>
</dbReference>
<dbReference type="GO" id="GO:0140545">
    <property type="term" value="F:ATP-dependent protein disaggregase activity"/>
    <property type="evidence" value="ECO:0000250"/>
    <property type="project" value="UniProtKB"/>
</dbReference>
<dbReference type="GO" id="GO:0140374">
    <property type="term" value="P:antiviral innate immune response"/>
    <property type="evidence" value="ECO:0000266"/>
    <property type="project" value="RGD"/>
</dbReference>
<dbReference type="GO" id="GO:0034605">
    <property type="term" value="P:cellular response to heat"/>
    <property type="evidence" value="ECO:0000266"/>
    <property type="project" value="RGD"/>
</dbReference>
<dbReference type="GO" id="GO:0030851">
    <property type="term" value="P:granulocyte differentiation"/>
    <property type="evidence" value="ECO:0000250"/>
    <property type="project" value="UniProtKB"/>
</dbReference>
<dbReference type="GO" id="GO:0039529">
    <property type="term" value="P:RIG-I signaling pathway"/>
    <property type="evidence" value="ECO:0000266"/>
    <property type="project" value="RGD"/>
</dbReference>
<dbReference type="CDD" id="cd19499">
    <property type="entry name" value="RecA-like_ClpB_Hsp104-like"/>
    <property type="match status" value="1"/>
</dbReference>
<dbReference type="FunFam" id="1.10.8.60:FF:000040">
    <property type="entry name" value="caseinolytic peptidase B protein homolog isoform X1"/>
    <property type="match status" value="1"/>
</dbReference>
<dbReference type="FunFam" id="1.25.40.20:FF:000203">
    <property type="entry name" value="caseinolytic peptidase B protein homolog isoform X1"/>
    <property type="match status" value="1"/>
</dbReference>
<dbReference type="FunFam" id="3.40.50.300:FF:000641">
    <property type="entry name" value="caseinolytic peptidase B protein homolog isoform X2"/>
    <property type="match status" value="1"/>
</dbReference>
<dbReference type="Gene3D" id="1.10.8.60">
    <property type="match status" value="1"/>
</dbReference>
<dbReference type="Gene3D" id="1.25.40.20">
    <property type="entry name" value="Ankyrin repeat-containing domain"/>
    <property type="match status" value="2"/>
</dbReference>
<dbReference type="Gene3D" id="3.40.50.300">
    <property type="entry name" value="P-loop containing nucleotide triphosphate hydrolases"/>
    <property type="match status" value="1"/>
</dbReference>
<dbReference type="InterPro" id="IPR003593">
    <property type="entry name" value="AAA+_ATPase"/>
</dbReference>
<dbReference type="InterPro" id="IPR002110">
    <property type="entry name" value="Ankyrin_rpt"/>
</dbReference>
<dbReference type="InterPro" id="IPR036770">
    <property type="entry name" value="Ankyrin_rpt-contain_sf"/>
</dbReference>
<dbReference type="InterPro" id="IPR003959">
    <property type="entry name" value="ATPase_AAA_core"/>
</dbReference>
<dbReference type="InterPro" id="IPR019489">
    <property type="entry name" value="Clp_ATPase_C"/>
</dbReference>
<dbReference type="InterPro" id="IPR001270">
    <property type="entry name" value="ClpA/B"/>
</dbReference>
<dbReference type="InterPro" id="IPR050130">
    <property type="entry name" value="ClpA_ClpB"/>
</dbReference>
<dbReference type="InterPro" id="IPR027417">
    <property type="entry name" value="P-loop_NTPase"/>
</dbReference>
<dbReference type="PANTHER" id="PTHR11638">
    <property type="entry name" value="ATP-DEPENDENT CLP PROTEASE"/>
    <property type="match status" value="1"/>
</dbReference>
<dbReference type="PANTHER" id="PTHR11638:SF93">
    <property type="entry name" value="MITOCHONDRIAL DISAGGREGASE"/>
    <property type="match status" value="1"/>
</dbReference>
<dbReference type="Pfam" id="PF07724">
    <property type="entry name" value="AAA_2"/>
    <property type="match status" value="1"/>
</dbReference>
<dbReference type="Pfam" id="PF12796">
    <property type="entry name" value="Ank_2"/>
    <property type="match status" value="2"/>
</dbReference>
<dbReference type="Pfam" id="PF10431">
    <property type="entry name" value="ClpB_D2-small"/>
    <property type="match status" value="1"/>
</dbReference>
<dbReference type="PRINTS" id="PR00300">
    <property type="entry name" value="CLPPROTEASEA"/>
</dbReference>
<dbReference type="SMART" id="SM00382">
    <property type="entry name" value="AAA"/>
    <property type="match status" value="1"/>
</dbReference>
<dbReference type="SMART" id="SM00248">
    <property type="entry name" value="ANK"/>
    <property type="match status" value="3"/>
</dbReference>
<dbReference type="SMART" id="SM01086">
    <property type="entry name" value="ClpB_D2-small"/>
    <property type="match status" value="1"/>
</dbReference>
<dbReference type="SUPFAM" id="SSF48403">
    <property type="entry name" value="Ankyrin repeat"/>
    <property type="match status" value="1"/>
</dbReference>
<dbReference type="SUPFAM" id="SSF52540">
    <property type="entry name" value="P-loop containing nucleoside triphosphate hydrolases"/>
    <property type="match status" value="1"/>
</dbReference>
<dbReference type="PROSITE" id="PS50297">
    <property type="entry name" value="ANK_REP_REGION"/>
    <property type="match status" value="1"/>
</dbReference>
<dbReference type="PROSITE" id="PS50088">
    <property type="entry name" value="ANK_REPEAT"/>
    <property type="match status" value="3"/>
</dbReference>
<feature type="transit peptide" description="Mitochondrion" evidence="2">
    <location>
        <begin position="1"/>
        <end position="57"/>
    </location>
</feature>
<feature type="chain" id="PRO_0000191241" description="Mitochondrial disaggregase">
    <location>
        <begin position="58"/>
        <end position="677"/>
    </location>
</feature>
<feature type="chain" id="PRO_0000458243" description="Mitochondrial disaggregase, cleaved form" evidence="1">
    <location>
        <begin position="127"/>
        <end position="677"/>
    </location>
</feature>
<feature type="repeat" description="ANK 1">
    <location>
        <begin position="133"/>
        <end position="162"/>
    </location>
</feature>
<feature type="repeat" description="ANK 2">
    <location>
        <begin position="166"/>
        <end position="195"/>
    </location>
</feature>
<feature type="repeat" description="ANK 3">
    <location>
        <begin position="235"/>
        <end position="265"/>
    </location>
</feature>
<feature type="repeat" description="ANK 4">
    <location>
        <begin position="268"/>
        <end position="297"/>
    </location>
</feature>
<feature type="region of interest" description="Disordered" evidence="3">
    <location>
        <begin position="64"/>
        <end position="103"/>
    </location>
</feature>
<feature type="region of interest" description="Autoinhibitory" evidence="1">
    <location>
        <begin position="92"/>
        <end position="126"/>
    </location>
</feature>
<feature type="region of interest" description="Regulatory; slows ATPase and disaggregase activities" evidence="1">
    <location>
        <begin position="477"/>
        <end position="505"/>
    </location>
</feature>
<feature type="binding site" evidence="1">
    <location>
        <position position="316"/>
    </location>
    <ligand>
        <name>ATP</name>
        <dbReference type="ChEBI" id="CHEBI:30616"/>
    </ligand>
</feature>
<feature type="binding site" evidence="1">
    <location>
        <position position="318"/>
    </location>
    <ligand>
        <name>ATP</name>
        <dbReference type="ChEBI" id="CHEBI:30616"/>
    </ligand>
</feature>
<feature type="binding site" evidence="1">
    <location>
        <position position="353"/>
    </location>
    <ligand>
        <name>ATP</name>
        <dbReference type="ChEBI" id="CHEBI:30616"/>
    </ligand>
</feature>
<feature type="binding site" evidence="1">
    <location>
        <position position="354"/>
    </location>
    <ligand>
        <name>ATP</name>
        <dbReference type="ChEBI" id="CHEBI:30616"/>
    </ligand>
</feature>
<feature type="binding site" evidence="1">
    <location>
        <position position="355"/>
    </location>
    <ligand>
        <name>ATP</name>
        <dbReference type="ChEBI" id="CHEBI:30616"/>
    </ligand>
</feature>
<feature type="binding site" evidence="1">
    <location>
        <position position="356"/>
    </location>
    <ligand>
        <name>ATP</name>
        <dbReference type="ChEBI" id="CHEBI:30616"/>
    </ligand>
</feature>
<feature type="binding site" evidence="1">
    <location>
        <position position="357"/>
    </location>
    <ligand>
        <name>ATP</name>
        <dbReference type="ChEBI" id="CHEBI:30616"/>
    </ligand>
</feature>
<feature type="binding site" evidence="1">
    <location>
        <position position="358"/>
    </location>
    <ligand>
        <name>ATP</name>
        <dbReference type="ChEBI" id="CHEBI:30616"/>
    </ligand>
</feature>
<feature type="binding site" evidence="1">
    <location>
        <position position="425"/>
    </location>
    <ligand>
        <name>ATP</name>
        <dbReference type="ChEBI" id="CHEBI:30616"/>
    </ligand>
</feature>
<feature type="binding site" evidence="1">
    <location>
        <position position="466"/>
    </location>
    <ligand>
        <name>ATP</name>
        <dbReference type="ChEBI" id="CHEBI:30616"/>
    </ligand>
</feature>
<feature type="binding site" evidence="1">
    <location>
        <position position="531"/>
    </location>
    <ligand>
        <name>ATP</name>
        <dbReference type="ChEBI" id="CHEBI:30616"/>
    </ligand>
</feature>
<feature type="binding site" evidence="1">
    <location>
        <position position="590"/>
    </location>
    <ligand>
        <name>ATP</name>
        <dbReference type="ChEBI" id="CHEBI:30616"/>
    </ligand>
</feature>
<feature type="site" description="Cleavage; by PARL" evidence="1">
    <location>
        <begin position="126"/>
        <end position="127"/>
    </location>
</feature>
<feature type="modified residue" description="N6-acetyllysine" evidence="1">
    <location>
        <position position="559"/>
    </location>
</feature>
<reference key="1">
    <citation type="submission" date="1999-05" db="EMBL/GenBank/DDBJ databases">
        <title>Molecular cloning and expression of suppressor of potassium transport defect 3 (SKD3) in rat testis.</title>
        <authorList>
            <person name="Hondo E."/>
        </authorList>
    </citation>
    <scope>NUCLEOTIDE SEQUENCE [MRNA]</scope>
    <source>
        <strain>Wistar</strain>
        <tissue>Testis</tissue>
    </source>
</reference>
<keyword id="KW-0007">Acetylation</keyword>
<keyword id="KW-0040">ANK repeat</keyword>
<keyword id="KW-0067">ATP-binding</keyword>
<keyword id="KW-0378">Hydrolase</keyword>
<keyword id="KW-0496">Mitochondrion</keyword>
<keyword id="KW-0547">Nucleotide-binding</keyword>
<keyword id="KW-1185">Reference proteome</keyword>
<keyword id="KW-0677">Repeat</keyword>
<keyword id="KW-0809">Transit peptide</keyword>
<comment type="function">
    <text evidence="1">Functions as a regulatory ATPase and participates in secretion/protein trafficking process. Has ATP-dependent protein disaggregase activity and is required to maintain the solubility of key mitochondrial proteins. Involved in mitochondrial-mediated antiviral innate immunity, activates RIG-I-mediated signal transduction and production of IFNB1 and pro-inflammatory cytokine IL6. Plays a role in granulocyte differentiation.</text>
</comment>
<comment type="catalytic activity">
    <reaction evidence="1">
        <text>ATP + H2O = ADP + phosphate + H(+)</text>
        <dbReference type="Rhea" id="RHEA:13065"/>
        <dbReference type="ChEBI" id="CHEBI:15377"/>
        <dbReference type="ChEBI" id="CHEBI:15378"/>
        <dbReference type="ChEBI" id="CHEBI:30616"/>
        <dbReference type="ChEBI" id="CHEBI:43474"/>
        <dbReference type="ChEBI" id="CHEBI:456216"/>
    </reaction>
</comment>
<comment type="activity regulation">
    <text evidence="1">Disaggregase activity is inhibited by ADP.</text>
</comment>
<comment type="subunit">
    <text evidence="1">Homododecamer when substrate-bound; the homododecamer consists of 2 homohexamers stacked head-to-head via ANK repeat-mediated interactions. The active substrate-bound form is likely to exist in a dynamic equilibrium between homohexamers and homododecamers. Homotetradecamer in the unbound state which is remodeled upon substrate binding into the homododecamer. Interacts with PHB and PHB2. Interacts with MAVS; the interaction is enhanced by Sendai virus infection.</text>
</comment>
<comment type="subcellular location">
    <subcellularLocation>
        <location evidence="1">Mitochondrion intermembrane space</location>
    </subcellularLocation>
</comment>
<comment type="domain">
    <text evidence="1">The ankyrin-repeat region is necessary for ATP-dependent protein disaggregase activity. It plays an important role in stabilizing the substrate-bound homododecamer by mediating contacts between the two homohexamers.</text>
</comment>
<comment type="PTM">
    <text evidence="1">Proteolytically cleaved by protease PARL. ATP-dependent protein disaggregase activity is stimulated by PARL-mediated cleavage of the N-terminal autoinhibitory peptide.</text>
</comment>
<comment type="similarity">
    <text evidence="4">Belongs to the ClpA/ClpB family.</text>
</comment>
<comment type="caution">
    <text evidence="4">Despite its gene name, this protein differs in domain structure from bacterial clpB. Bacterial clpB contains two AAA modules, one in the N-terminal part of the protein and one in the C-terminal part, separated by a coiled coil, while vertebrate CLPB contains a single C-terminal AAA region and an N-terminal ANK repeat region which is absent from bacterial clpB.</text>
</comment>
<sequence>MMLSAVLRRTAPAPRLFLGLIKSPSLQSRGGAYNRSVITGDRGEPQRLRTAAWVRPGASSVLFPGRGAATGGRRGERTEIPYLTAASSGRGPSPEETLPGQDSWNGVPNKAGLGMWALAMALVVQCYNKNPSNKDAALMEAARANNVQEVRRLLSEGADVNARHKLGWTALMVAAISHNESVVQVLLAAGADPNLGDDFSSVYKTANEQGVHSLEVLVTREDDFNNRLNHRASFKGCTALHYAVLADDYSIVKELLGGGANPLQRNEMGHTPLDYAREGEVMKLLKTSETKYMEKQRKREAEERRRFPLEQRLEQHIIGQESAIATVGAAIRRKENGWYDEEHPLVFLFLGSSGIGKTELAKQTAKYMHKDAKKGFIRLDMSEFQERHEVAKFIGSPPGYIGHEEGGQLTKKLKQCPNAVVLFDEVDKAHPDVLTIMLQLFDEGRLTDGKGKTIDCKDAIFIMTSNVASDEIAQHALQLRQEALEMSRNRIAENLGDVQISDKITISKNFKENMIRPILKAHFRRDEFLGRINEIVYFLPFCHSELIQLVNKELNFWAKRAKQRHNITLLWDREVADVLVDGYNVQYGARSIKHEVERRVVNQLAAAYEQDLLPGGCTLRITVEDSDKQLLKSPELPSPQAEKRPPTLRLEIIDKDSKTHKLDIQAPLHPEKVCYTI</sequence>
<accession>Q9WTT2</accession>
<protein>
    <recommendedName>
        <fullName>Mitochondrial disaggregase</fullName>
        <ecNumber evidence="1">3.6.1.-</ecNumber>
    </recommendedName>
    <alternativeName>
        <fullName>Suppressor of potassium transport defect 3</fullName>
    </alternativeName>
    <component>
        <recommendedName>
            <fullName>Mitochondrial disaggregase, cleaved form</fullName>
        </recommendedName>
    </component>
</protein>
<evidence type="ECO:0000250" key="1">
    <source>
        <dbReference type="UniProtKB" id="Q9H078"/>
    </source>
</evidence>
<evidence type="ECO:0000255" key="2"/>
<evidence type="ECO:0000256" key="3">
    <source>
        <dbReference type="SAM" id="MobiDB-lite"/>
    </source>
</evidence>
<evidence type="ECO:0000305" key="4"/>
<evidence type="ECO:0000312" key="5">
    <source>
        <dbReference type="RGD" id="621328"/>
    </source>
</evidence>